<gene>
    <name type="ordered locus">MJ0583</name>
</gene>
<feature type="chain" id="PRO_0000106943" description="Uncharacterized protein MJ0583">
    <location>
        <begin position="1"/>
        <end position="57"/>
    </location>
</feature>
<reference key="1">
    <citation type="journal article" date="1996" name="Science">
        <title>Complete genome sequence of the methanogenic archaeon, Methanococcus jannaschii.</title>
        <authorList>
            <person name="Bult C.J."/>
            <person name="White O."/>
            <person name="Olsen G.J."/>
            <person name="Zhou L."/>
            <person name="Fleischmann R.D."/>
            <person name="Sutton G.G."/>
            <person name="Blake J.A."/>
            <person name="FitzGerald L.M."/>
            <person name="Clayton R.A."/>
            <person name="Gocayne J.D."/>
            <person name="Kerlavage A.R."/>
            <person name="Dougherty B.A."/>
            <person name="Tomb J.-F."/>
            <person name="Adams M.D."/>
            <person name="Reich C.I."/>
            <person name="Overbeek R."/>
            <person name="Kirkness E.F."/>
            <person name="Weinstock K.G."/>
            <person name="Merrick J.M."/>
            <person name="Glodek A."/>
            <person name="Scott J.L."/>
            <person name="Geoghagen N.S.M."/>
            <person name="Weidman J.F."/>
            <person name="Fuhrmann J.L."/>
            <person name="Nguyen D."/>
            <person name="Utterback T.R."/>
            <person name="Kelley J.M."/>
            <person name="Peterson J.D."/>
            <person name="Sadow P.W."/>
            <person name="Hanna M.C."/>
            <person name="Cotton M.D."/>
            <person name="Roberts K.M."/>
            <person name="Hurst M.A."/>
            <person name="Kaine B.P."/>
            <person name="Borodovsky M."/>
            <person name="Klenk H.-P."/>
            <person name="Fraser C.M."/>
            <person name="Smith H.O."/>
            <person name="Woese C.R."/>
            <person name="Venter J.C."/>
        </authorList>
    </citation>
    <scope>NUCLEOTIDE SEQUENCE [LARGE SCALE GENOMIC DNA]</scope>
    <source>
        <strain>ATCC 43067 / DSM 2661 / JAL-1 / JCM 10045 / NBRC 100440</strain>
    </source>
</reference>
<accession>Q58003</accession>
<sequence length="57" mass="6626">MIVWNLICPKCGKRLRYKVDVCPCMASEVELPNCPDCGEKMVHDYTSLKGRRRIRRG</sequence>
<name>Y583_METJA</name>
<organism>
    <name type="scientific">Methanocaldococcus jannaschii (strain ATCC 43067 / DSM 2661 / JAL-1 / JCM 10045 / NBRC 100440)</name>
    <name type="common">Methanococcus jannaschii</name>
    <dbReference type="NCBI Taxonomy" id="243232"/>
    <lineage>
        <taxon>Archaea</taxon>
        <taxon>Methanobacteriati</taxon>
        <taxon>Methanobacteriota</taxon>
        <taxon>Methanomada group</taxon>
        <taxon>Methanococci</taxon>
        <taxon>Methanococcales</taxon>
        <taxon>Methanocaldococcaceae</taxon>
        <taxon>Methanocaldococcus</taxon>
    </lineage>
</organism>
<proteinExistence type="predicted"/>
<protein>
    <recommendedName>
        <fullName>Uncharacterized protein MJ0583</fullName>
    </recommendedName>
</protein>
<keyword id="KW-1185">Reference proteome</keyword>
<dbReference type="EMBL" id="L77117">
    <property type="protein sequence ID" value="AAB98582.1"/>
    <property type="molecule type" value="Genomic_DNA"/>
</dbReference>
<dbReference type="PIR" id="G64372">
    <property type="entry name" value="G64372"/>
</dbReference>
<dbReference type="RefSeq" id="WP_010870087.1">
    <property type="nucleotide sequence ID" value="NC_000909.1"/>
</dbReference>
<dbReference type="SMR" id="Q58003"/>
<dbReference type="FunCoup" id="Q58003">
    <property type="interactions" value="8"/>
</dbReference>
<dbReference type="STRING" id="243232.MJ_0583"/>
<dbReference type="PaxDb" id="243232-MJ_0583"/>
<dbReference type="EnsemblBacteria" id="AAB98582">
    <property type="protein sequence ID" value="AAB98582"/>
    <property type="gene ID" value="MJ_0583"/>
</dbReference>
<dbReference type="GeneID" id="54763059"/>
<dbReference type="KEGG" id="mja:MJ_0583"/>
<dbReference type="eggNOG" id="arCOG05041">
    <property type="taxonomic scope" value="Archaea"/>
</dbReference>
<dbReference type="HOGENOM" id="CLU_200897_0_0_2"/>
<dbReference type="InParanoid" id="Q58003"/>
<dbReference type="OrthoDB" id="63150at2157"/>
<dbReference type="Proteomes" id="UP000000805">
    <property type="component" value="Chromosome"/>
</dbReference>
<dbReference type="SUPFAM" id="SSF161187">
    <property type="entry name" value="YfgJ-like"/>
    <property type="match status" value="1"/>
</dbReference>